<sequence>MSVYGLQRLYIGGAYVDATSGKTFDTFDPATGELLAQVQQASAADVDRAVASAQQGQREWAALTAMQRSRILRRAVDLLRERNDELAAIETRDTGKPIGETLAVDIVTGADVIEYYAGLATAIEGLQVPLRAESFVYTRREPLGVCAGIGAWNYPIQIACWKTAPALAAGNAMVFKPSEVTPLTALKLAEIYTEAGVPAGVFNVVQGDGSVGALLTGHPDIAKVSFTGGVETGKKVMSLAGASSLKEVTMELGGKSPLIVFDDADLDRAADIAVIANFFSSGQVCTNGTRVFVQRSIKDAFTAKVLERVKRIRVGKPTDADTNFGPLVSAAQLDKVLGFIASGKAEGAKLLAGGTRLTDGHFADGQYVAPTVFGDCRDDMKIVREEIFGPVMSILDFESEDEVIARANDTHYGLAAGVVTENLSRAHRTIHRLEAGICWINTWGESPAEMPVGGYKQSGVGRENGITTLEHYTRIKSVQVELGRYNPVF</sequence>
<organism>
    <name type="scientific">Burkholderia vietnamiensis (strain G4 / LMG 22486)</name>
    <name type="common">Burkholderia cepacia (strain R1808)</name>
    <dbReference type="NCBI Taxonomy" id="269482"/>
    <lineage>
        <taxon>Bacteria</taxon>
        <taxon>Pseudomonadati</taxon>
        <taxon>Pseudomonadota</taxon>
        <taxon>Betaproteobacteria</taxon>
        <taxon>Burkholderiales</taxon>
        <taxon>Burkholderiaceae</taxon>
        <taxon>Burkholderia</taxon>
        <taxon>Burkholderia cepacia complex</taxon>
    </lineage>
</organism>
<comment type="function">
    <text evidence="1">Involved in the biosynthesis of the osmoprotectant glycine betaine. Catalyzes the irreversible oxidation of betaine aldehyde to the corresponding acid.</text>
</comment>
<comment type="catalytic activity">
    <reaction evidence="1">
        <text>betaine aldehyde + NAD(+) + H2O = glycine betaine + NADH + 2 H(+)</text>
        <dbReference type="Rhea" id="RHEA:15305"/>
        <dbReference type="ChEBI" id="CHEBI:15377"/>
        <dbReference type="ChEBI" id="CHEBI:15378"/>
        <dbReference type="ChEBI" id="CHEBI:15710"/>
        <dbReference type="ChEBI" id="CHEBI:17750"/>
        <dbReference type="ChEBI" id="CHEBI:57540"/>
        <dbReference type="ChEBI" id="CHEBI:57945"/>
        <dbReference type="EC" id="1.2.1.8"/>
    </reaction>
    <physiologicalReaction direction="left-to-right" evidence="1">
        <dbReference type="Rhea" id="RHEA:15306"/>
    </physiologicalReaction>
</comment>
<comment type="cofactor">
    <cofactor evidence="1">
        <name>K(+)</name>
        <dbReference type="ChEBI" id="CHEBI:29103"/>
    </cofactor>
    <text evidence="1">Binds 2 potassium ions per subunit.</text>
</comment>
<comment type="pathway">
    <text evidence="1">Amine and polyamine biosynthesis; betaine biosynthesis via choline pathway; betaine from betaine aldehyde: step 1/1.</text>
</comment>
<comment type="subunit">
    <text evidence="1">Dimer of dimers.</text>
</comment>
<comment type="similarity">
    <text evidence="1">Belongs to the aldehyde dehydrogenase family.</text>
</comment>
<feature type="chain" id="PRO_1000047041" description="Betaine aldehyde dehydrogenase">
    <location>
        <begin position="1"/>
        <end position="489"/>
    </location>
</feature>
<feature type="active site" description="Charge relay system" evidence="1">
    <location>
        <position position="162"/>
    </location>
</feature>
<feature type="active site" description="Proton acceptor" evidence="1">
    <location>
        <position position="251"/>
    </location>
</feature>
<feature type="active site" description="Nucleophile" evidence="1">
    <location>
        <position position="285"/>
    </location>
</feature>
<feature type="active site" description="Charge relay system" evidence="1">
    <location>
        <position position="463"/>
    </location>
</feature>
<feature type="binding site" evidence="1">
    <location>
        <position position="26"/>
    </location>
    <ligand>
        <name>K(+)</name>
        <dbReference type="ChEBI" id="CHEBI:29103"/>
        <label>1</label>
    </ligand>
</feature>
<feature type="binding site" evidence="1">
    <location>
        <position position="93"/>
    </location>
    <ligand>
        <name>K(+)</name>
        <dbReference type="ChEBI" id="CHEBI:29103"/>
        <label>1</label>
    </ligand>
</feature>
<feature type="binding site" evidence="1">
    <location>
        <begin position="150"/>
        <end position="152"/>
    </location>
    <ligand>
        <name>NAD(+)</name>
        <dbReference type="ChEBI" id="CHEBI:57540"/>
    </ligand>
</feature>
<feature type="binding site" evidence="1">
    <location>
        <begin position="176"/>
        <end position="179"/>
    </location>
    <ligand>
        <name>NAD(+)</name>
        <dbReference type="ChEBI" id="CHEBI:57540"/>
    </ligand>
</feature>
<feature type="binding site" evidence="1">
    <location>
        <position position="180"/>
    </location>
    <ligand>
        <name>K(+)</name>
        <dbReference type="ChEBI" id="CHEBI:29103"/>
        <label>1</label>
    </ligand>
</feature>
<feature type="binding site" evidence="1">
    <location>
        <begin position="229"/>
        <end position="232"/>
    </location>
    <ligand>
        <name>NAD(+)</name>
        <dbReference type="ChEBI" id="CHEBI:57540"/>
    </ligand>
</feature>
<feature type="binding site" evidence="1">
    <location>
        <position position="245"/>
    </location>
    <ligand>
        <name>K(+)</name>
        <dbReference type="ChEBI" id="CHEBI:29103"/>
        <label>2</label>
    </ligand>
</feature>
<feature type="binding site" evidence="1">
    <location>
        <position position="253"/>
    </location>
    <ligand>
        <name>NAD(+)</name>
        <dbReference type="ChEBI" id="CHEBI:57540"/>
    </ligand>
</feature>
<feature type="binding site" description="covalent" evidence="1">
    <location>
        <position position="285"/>
    </location>
    <ligand>
        <name>NAD(+)</name>
        <dbReference type="ChEBI" id="CHEBI:57540"/>
    </ligand>
</feature>
<feature type="binding site" evidence="1">
    <location>
        <position position="386"/>
    </location>
    <ligand>
        <name>NAD(+)</name>
        <dbReference type="ChEBI" id="CHEBI:57540"/>
    </ligand>
</feature>
<feature type="binding site" evidence="1">
    <location>
        <position position="456"/>
    </location>
    <ligand>
        <name>K(+)</name>
        <dbReference type="ChEBI" id="CHEBI:29103"/>
        <label>2</label>
    </ligand>
</feature>
<feature type="binding site" evidence="1">
    <location>
        <position position="459"/>
    </location>
    <ligand>
        <name>K(+)</name>
        <dbReference type="ChEBI" id="CHEBI:29103"/>
        <label>2</label>
    </ligand>
</feature>
<feature type="site" description="Seems to be a necessary countercharge to the potassium cations" evidence="1">
    <location>
        <position position="247"/>
    </location>
</feature>
<feature type="modified residue" description="Cysteine sulfenic acid (-SOH)" evidence="1">
    <location>
        <position position="285"/>
    </location>
</feature>
<dbReference type="EC" id="1.2.1.8" evidence="1"/>
<dbReference type="EMBL" id="CP000615">
    <property type="protein sequence ID" value="ABO56418.1"/>
    <property type="molecule type" value="Genomic_DNA"/>
</dbReference>
<dbReference type="SMR" id="A4JJG5"/>
<dbReference type="KEGG" id="bvi:Bcep1808_3430"/>
<dbReference type="eggNOG" id="COG1012">
    <property type="taxonomic scope" value="Bacteria"/>
</dbReference>
<dbReference type="HOGENOM" id="CLU_005391_0_0_4"/>
<dbReference type="UniPathway" id="UPA00529">
    <property type="reaction ID" value="UER00386"/>
</dbReference>
<dbReference type="Proteomes" id="UP000002287">
    <property type="component" value="Chromosome 2"/>
</dbReference>
<dbReference type="GO" id="GO:0008802">
    <property type="term" value="F:betaine-aldehyde dehydrogenase (NAD+) activity"/>
    <property type="evidence" value="ECO:0007669"/>
    <property type="project" value="UniProtKB-UniRule"/>
</dbReference>
<dbReference type="GO" id="GO:0046872">
    <property type="term" value="F:metal ion binding"/>
    <property type="evidence" value="ECO:0007669"/>
    <property type="project" value="UniProtKB-KW"/>
</dbReference>
<dbReference type="GO" id="GO:0019285">
    <property type="term" value="P:glycine betaine biosynthetic process from choline"/>
    <property type="evidence" value="ECO:0007669"/>
    <property type="project" value="UniProtKB-UniRule"/>
</dbReference>
<dbReference type="CDD" id="cd07090">
    <property type="entry name" value="ALDH_F9_TMBADH"/>
    <property type="match status" value="1"/>
</dbReference>
<dbReference type="FunFam" id="3.40.309.10:FF:000014">
    <property type="entry name" value="NAD/NADP-dependent betaine aldehyde dehydrogenase"/>
    <property type="match status" value="1"/>
</dbReference>
<dbReference type="FunFam" id="3.40.605.10:FF:000007">
    <property type="entry name" value="NAD/NADP-dependent betaine aldehyde dehydrogenase"/>
    <property type="match status" value="1"/>
</dbReference>
<dbReference type="Gene3D" id="3.40.605.10">
    <property type="entry name" value="Aldehyde Dehydrogenase, Chain A, domain 1"/>
    <property type="match status" value="1"/>
</dbReference>
<dbReference type="Gene3D" id="3.40.309.10">
    <property type="entry name" value="Aldehyde Dehydrogenase, Chain A, domain 2"/>
    <property type="match status" value="1"/>
</dbReference>
<dbReference type="HAMAP" id="MF_00804">
    <property type="entry name" value="BADH"/>
    <property type="match status" value="1"/>
</dbReference>
<dbReference type="InterPro" id="IPR016161">
    <property type="entry name" value="Ald_DH/histidinol_DH"/>
</dbReference>
<dbReference type="InterPro" id="IPR016163">
    <property type="entry name" value="Ald_DH_C"/>
</dbReference>
<dbReference type="InterPro" id="IPR016160">
    <property type="entry name" value="Ald_DH_CS_CYS"/>
</dbReference>
<dbReference type="InterPro" id="IPR029510">
    <property type="entry name" value="Ald_DH_CS_GLU"/>
</dbReference>
<dbReference type="InterPro" id="IPR016162">
    <property type="entry name" value="Ald_DH_N"/>
</dbReference>
<dbReference type="InterPro" id="IPR015590">
    <property type="entry name" value="Aldehyde_DH_dom"/>
</dbReference>
<dbReference type="InterPro" id="IPR011264">
    <property type="entry name" value="BADH"/>
</dbReference>
<dbReference type="NCBIfam" id="TIGR01804">
    <property type="entry name" value="BADH"/>
    <property type="match status" value="1"/>
</dbReference>
<dbReference type="NCBIfam" id="NF009725">
    <property type="entry name" value="PRK13252.1"/>
    <property type="match status" value="1"/>
</dbReference>
<dbReference type="PANTHER" id="PTHR11699">
    <property type="entry name" value="ALDEHYDE DEHYDROGENASE-RELATED"/>
    <property type="match status" value="1"/>
</dbReference>
<dbReference type="Pfam" id="PF00171">
    <property type="entry name" value="Aldedh"/>
    <property type="match status" value="1"/>
</dbReference>
<dbReference type="SUPFAM" id="SSF53720">
    <property type="entry name" value="ALDH-like"/>
    <property type="match status" value="1"/>
</dbReference>
<dbReference type="PROSITE" id="PS00070">
    <property type="entry name" value="ALDEHYDE_DEHYDR_CYS"/>
    <property type="match status" value="1"/>
</dbReference>
<dbReference type="PROSITE" id="PS00687">
    <property type="entry name" value="ALDEHYDE_DEHYDR_GLU"/>
    <property type="match status" value="1"/>
</dbReference>
<keyword id="KW-0479">Metal-binding</keyword>
<keyword id="KW-0520">NAD</keyword>
<keyword id="KW-0521">NADP</keyword>
<keyword id="KW-0558">Oxidation</keyword>
<keyword id="KW-0560">Oxidoreductase</keyword>
<keyword id="KW-0630">Potassium</keyword>
<reference key="1">
    <citation type="submission" date="2007-03" db="EMBL/GenBank/DDBJ databases">
        <title>Complete sequence of chromosome 2 of Burkholderia vietnamiensis G4.</title>
        <authorList>
            <consortium name="US DOE Joint Genome Institute"/>
            <person name="Copeland A."/>
            <person name="Lucas S."/>
            <person name="Lapidus A."/>
            <person name="Barry K."/>
            <person name="Detter J.C."/>
            <person name="Glavina del Rio T."/>
            <person name="Hammon N."/>
            <person name="Israni S."/>
            <person name="Dalin E."/>
            <person name="Tice H."/>
            <person name="Pitluck S."/>
            <person name="Chain P."/>
            <person name="Malfatti S."/>
            <person name="Shin M."/>
            <person name="Vergez L."/>
            <person name="Schmutz J."/>
            <person name="Larimer F."/>
            <person name="Land M."/>
            <person name="Hauser L."/>
            <person name="Kyrpides N."/>
            <person name="Tiedje J."/>
            <person name="Richardson P."/>
        </authorList>
    </citation>
    <scope>NUCLEOTIDE SEQUENCE [LARGE SCALE GENOMIC DNA]</scope>
    <source>
        <strain>G4 / LMG 22486</strain>
    </source>
</reference>
<proteinExistence type="inferred from homology"/>
<evidence type="ECO:0000255" key="1">
    <source>
        <dbReference type="HAMAP-Rule" id="MF_00804"/>
    </source>
</evidence>
<protein>
    <recommendedName>
        <fullName evidence="1">Betaine aldehyde dehydrogenase</fullName>
        <shortName evidence="1">BADH</shortName>
        <ecNumber evidence="1">1.2.1.8</ecNumber>
    </recommendedName>
</protein>
<gene>
    <name evidence="1" type="primary">betB</name>
    <name type="ordered locus">Bcep1808_3430</name>
</gene>
<name>BETB_BURVG</name>
<accession>A4JJG5</accession>